<feature type="chain" id="PRO_1000200200" description="Protein RnfH">
    <location>
        <begin position="1"/>
        <end position="94"/>
    </location>
</feature>
<comment type="similarity">
    <text evidence="1">Belongs to the UPF0125 (RnfH) family.</text>
</comment>
<organism>
    <name type="scientific">Yersinia pseudotuberculosis serotype IB (strain PB1/+)</name>
    <dbReference type="NCBI Taxonomy" id="502801"/>
    <lineage>
        <taxon>Bacteria</taxon>
        <taxon>Pseudomonadati</taxon>
        <taxon>Pseudomonadota</taxon>
        <taxon>Gammaproteobacteria</taxon>
        <taxon>Enterobacterales</taxon>
        <taxon>Yersiniaceae</taxon>
        <taxon>Yersinia</taxon>
    </lineage>
</organism>
<name>RNFH_YERPB</name>
<dbReference type="EMBL" id="CP001048">
    <property type="protein sequence ID" value="ACC88189.1"/>
    <property type="molecule type" value="Genomic_DNA"/>
</dbReference>
<dbReference type="RefSeq" id="WP_002210716.1">
    <property type="nucleotide sequence ID" value="NZ_CP009780.1"/>
</dbReference>
<dbReference type="SMR" id="B2K8D9"/>
<dbReference type="KEGG" id="ypb:YPTS_1214"/>
<dbReference type="PATRIC" id="fig|502801.10.peg.563"/>
<dbReference type="Gene3D" id="3.10.20.280">
    <property type="entry name" value="RnfH-like"/>
    <property type="match status" value="1"/>
</dbReference>
<dbReference type="HAMAP" id="MF_00460">
    <property type="entry name" value="UPF0125_RnfH"/>
    <property type="match status" value="1"/>
</dbReference>
<dbReference type="InterPro" id="IPR016155">
    <property type="entry name" value="Mopterin_synth/thiamin_S_b"/>
</dbReference>
<dbReference type="InterPro" id="IPR005346">
    <property type="entry name" value="RnfH"/>
</dbReference>
<dbReference type="InterPro" id="IPR037021">
    <property type="entry name" value="RnfH_sf"/>
</dbReference>
<dbReference type="NCBIfam" id="NF002490">
    <property type="entry name" value="PRK01777.1"/>
    <property type="match status" value="1"/>
</dbReference>
<dbReference type="PANTHER" id="PTHR37483">
    <property type="entry name" value="UPF0125 PROTEIN RATB"/>
    <property type="match status" value="1"/>
</dbReference>
<dbReference type="PANTHER" id="PTHR37483:SF1">
    <property type="entry name" value="UPF0125 PROTEIN RATB"/>
    <property type="match status" value="1"/>
</dbReference>
<dbReference type="Pfam" id="PF03658">
    <property type="entry name" value="Ub-RnfH"/>
    <property type="match status" value="1"/>
</dbReference>
<dbReference type="SUPFAM" id="SSF54285">
    <property type="entry name" value="MoaD/ThiS"/>
    <property type="match status" value="1"/>
</dbReference>
<proteinExistence type="inferred from homology"/>
<protein>
    <recommendedName>
        <fullName evidence="1">Protein RnfH</fullName>
    </recommendedName>
</protein>
<sequence>MPDIRVEVVYALSERQYLRTVSLVVGSTVEDAIKASGLLELRPDIDLEKNKVGIYSRPVKLGDKLNDGDRVEIYRPLIADPKELRRQRAEQAKK</sequence>
<reference key="1">
    <citation type="submission" date="2008-04" db="EMBL/GenBank/DDBJ databases">
        <title>Complete sequence of Yersinia pseudotuberculosis PB1/+.</title>
        <authorList>
            <person name="Copeland A."/>
            <person name="Lucas S."/>
            <person name="Lapidus A."/>
            <person name="Glavina del Rio T."/>
            <person name="Dalin E."/>
            <person name="Tice H."/>
            <person name="Bruce D."/>
            <person name="Goodwin L."/>
            <person name="Pitluck S."/>
            <person name="Munk A.C."/>
            <person name="Brettin T."/>
            <person name="Detter J.C."/>
            <person name="Han C."/>
            <person name="Tapia R."/>
            <person name="Schmutz J."/>
            <person name="Larimer F."/>
            <person name="Land M."/>
            <person name="Hauser L."/>
            <person name="Challacombe J.F."/>
            <person name="Green L."/>
            <person name="Lindler L.E."/>
            <person name="Nikolich M.P."/>
            <person name="Richardson P."/>
        </authorList>
    </citation>
    <scope>NUCLEOTIDE SEQUENCE [LARGE SCALE GENOMIC DNA]</scope>
    <source>
        <strain>PB1/+</strain>
    </source>
</reference>
<accession>B2K8D9</accession>
<evidence type="ECO:0000255" key="1">
    <source>
        <dbReference type="HAMAP-Rule" id="MF_00460"/>
    </source>
</evidence>
<gene>
    <name evidence="1" type="primary">rnfH</name>
    <name type="ordered locus">YPTS_1214</name>
</gene>